<feature type="chain" id="PRO_0000095990" description="Protein-export membrane protein SecD">
    <location>
        <begin position="1"/>
        <end position="396"/>
    </location>
</feature>
<feature type="transmembrane region" description="Helical" evidence="1">
    <location>
        <begin position="12"/>
        <end position="32"/>
    </location>
</feature>
<feature type="transmembrane region" description="Helical" evidence="1">
    <location>
        <begin position="243"/>
        <end position="263"/>
    </location>
</feature>
<feature type="transmembrane region" description="Helical" evidence="1">
    <location>
        <begin position="272"/>
        <end position="292"/>
    </location>
</feature>
<feature type="transmembrane region" description="Helical" evidence="1">
    <location>
        <begin position="298"/>
        <end position="318"/>
    </location>
</feature>
<feature type="transmembrane region" description="Helical" evidence="1">
    <location>
        <begin position="338"/>
        <end position="358"/>
    </location>
</feature>
<feature type="transmembrane region" description="Helical" evidence="1">
    <location>
        <begin position="360"/>
        <end position="380"/>
    </location>
</feature>
<name>SECD_METJA</name>
<sequence length="396" mass="43052">MDISKLLKDRKILILIIFVTLSVFLIVFKGLDFGIDLSGGTIIVLKAEKPMSDKEIEATIKIITERLNYNGLNDVVIYPRGNDEIIVEIPKSCDTDRIIKILKQQGVFVAKIDNITAYTGSDVQNVELPTKIPQGETWAYGVPFELTLEGAKKFAEVAKGKAYHKVELYMDGKLISAPVLSPDLADGKPHPQQVITVGAYPPTKEEIDEAMAIYSALKSGALPVKLDIEYISTISPEFGKEFLKGTAIALLLAFIAVGIIVSIRYKQPKIAIPILITCISEVIIILGFASLIDWKLDLPSIAGIIAAVGTGVDNQIVITDEALKRGAGKIRASIKRAFFIIFASAATSIAAMLPLFVLGVGMLKGFAITTIAGVLIGIFITRPAFARIIEEMFKKF</sequence>
<keyword id="KW-1003">Cell membrane</keyword>
<keyword id="KW-0472">Membrane</keyword>
<keyword id="KW-0653">Protein transport</keyword>
<keyword id="KW-1185">Reference proteome</keyword>
<keyword id="KW-0811">Translocation</keyword>
<keyword id="KW-0812">Transmembrane</keyword>
<keyword id="KW-1133">Transmembrane helix</keyword>
<keyword id="KW-0813">Transport</keyword>
<protein>
    <recommendedName>
        <fullName evidence="1">Protein-export membrane protein SecD</fullName>
    </recommendedName>
</protein>
<comment type="function">
    <text evidence="1">Involved in protein export.</text>
</comment>
<comment type="subunit">
    <text evidence="1">Part of the protein translocation apparatus. Forms a complex with SecF.</text>
</comment>
<comment type="subcellular location">
    <subcellularLocation>
        <location evidence="1">Cell membrane</location>
        <topology evidence="1">Multi-pass membrane protein</topology>
    </subcellularLocation>
</comment>
<comment type="similarity">
    <text evidence="1">Belongs to the SecD/SecF family. SecD subfamily.</text>
</comment>
<evidence type="ECO:0000255" key="1">
    <source>
        <dbReference type="HAMAP-Rule" id="MF_01463"/>
    </source>
</evidence>
<reference key="1">
    <citation type="journal article" date="1996" name="Science">
        <title>Complete genome sequence of the methanogenic archaeon, Methanococcus jannaschii.</title>
        <authorList>
            <person name="Bult C.J."/>
            <person name="White O."/>
            <person name="Olsen G.J."/>
            <person name="Zhou L."/>
            <person name="Fleischmann R.D."/>
            <person name="Sutton G.G."/>
            <person name="Blake J.A."/>
            <person name="FitzGerald L.M."/>
            <person name="Clayton R.A."/>
            <person name="Gocayne J.D."/>
            <person name="Kerlavage A.R."/>
            <person name="Dougherty B.A."/>
            <person name="Tomb J.-F."/>
            <person name="Adams M.D."/>
            <person name="Reich C.I."/>
            <person name="Overbeek R."/>
            <person name="Kirkness E.F."/>
            <person name="Weinstock K.G."/>
            <person name="Merrick J.M."/>
            <person name="Glodek A."/>
            <person name="Scott J.L."/>
            <person name="Geoghagen N.S.M."/>
            <person name="Weidman J.F."/>
            <person name="Fuhrmann J.L."/>
            <person name="Nguyen D."/>
            <person name="Utterback T.R."/>
            <person name="Kelley J.M."/>
            <person name="Peterson J.D."/>
            <person name="Sadow P.W."/>
            <person name="Hanna M.C."/>
            <person name="Cotton M.D."/>
            <person name="Roberts K.M."/>
            <person name="Hurst M.A."/>
            <person name="Kaine B.P."/>
            <person name="Borodovsky M."/>
            <person name="Klenk H.-P."/>
            <person name="Fraser C.M."/>
            <person name="Smith H.O."/>
            <person name="Woese C.R."/>
            <person name="Venter J.C."/>
        </authorList>
    </citation>
    <scope>NUCLEOTIDE SEQUENCE [LARGE SCALE GENOMIC DNA]</scope>
    <source>
        <strain>ATCC 43067 / DSM 2661 / JAL-1 / JCM 10045 / NBRC 100440</strain>
    </source>
</reference>
<accession>Q57575</accession>
<dbReference type="EMBL" id="L77117">
    <property type="protein sequence ID" value="AAB98092.1"/>
    <property type="molecule type" value="Genomic_DNA"/>
</dbReference>
<dbReference type="PIR" id="G64313">
    <property type="entry name" value="G64313"/>
</dbReference>
<dbReference type="RefSeq" id="WP_010869603.1">
    <property type="nucleotide sequence ID" value="NC_000909.1"/>
</dbReference>
<dbReference type="SMR" id="Q57575"/>
<dbReference type="FunCoup" id="Q57575">
    <property type="interactions" value="10"/>
</dbReference>
<dbReference type="STRING" id="243232.MJ_0111"/>
<dbReference type="PaxDb" id="243232-MJ_0111"/>
<dbReference type="EnsemblBacteria" id="AAB98092">
    <property type="protein sequence ID" value="AAB98092"/>
    <property type="gene ID" value="MJ_0111"/>
</dbReference>
<dbReference type="GeneID" id="1450952"/>
<dbReference type="KEGG" id="mja:MJ_0111"/>
<dbReference type="eggNOG" id="arCOG03055">
    <property type="taxonomic scope" value="Archaea"/>
</dbReference>
<dbReference type="HOGENOM" id="CLU_007894_5_1_2"/>
<dbReference type="InParanoid" id="Q57575"/>
<dbReference type="OrthoDB" id="146638at2157"/>
<dbReference type="PhylomeDB" id="Q57575"/>
<dbReference type="Proteomes" id="UP000000805">
    <property type="component" value="Chromosome"/>
</dbReference>
<dbReference type="GO" id="GO:0005886">
    <property type="term" value="C:plasma membrane"/>
    <property type="evidence" value="ECO:0000318"/>
    <property type="project" value="GO_Central"/>
</dbReference>
<dbReference type="GO" id="GO:0065002">
    <property type="term" value="P:intracellular protein transmembrane transport"/>
    <property type="evidence" value="ECO:0007669"/>
    <property type="project" value="UniProtKB-UniRule"/>
</dbReference>
<dbReference type="GO" id="GO:0006605">
    <property type="term" value="P:protein targeting"/>
    <property type="evidence" value="ECO:0007669"/>
    <property type="project" value="UniProtKB-UniRule"/>
</dbReference>
<dbReference type="GO" id="GO:0015031">
    <property type="term" value="P:protein transport"/>
    <property type="evidence" value="ECO:0000318"/>
    <property type="project" value="GO_Central"/>
</dbReference>
<dbReference type="Gene3D" id="3.30.70.3220">
    <property type="match status" value="1"/>
</dbReference>
<dbReference type="Gene3D" id="1.20.1640.10">
    <property type="entry name" value="Multidrug efflux transporter AcrB transmembrane domain"/>
    <property type="match status" value="1"/>
</dbReference>
<dbReference type="HAMAP" id="MF_01463_A">
    <property type="entry name" value="SecD_A"/>
    <property type="match status" value="1"/>
</dbReference>
<dbReference type="InterPro" id="IPR022813">
    <property type="entry name" value="SecD/SecF_arch_bac"/>
</dbReference>
<dbReference type="InterPro" id="IPR022646">
    <property type="entry name" value="SecD/SecF_CS"/>
</dbReference>
<dbReference type="InterPro" id="IPR048631">
    <property type="entry name" value="SecD_1st"/>
</dbReference>
<dbReference type="InterPro" id="IPR024912">
    <property type="entry name" value="SecD_arc"/>
</dbReference>
<dbReference type="InterPro" id="IPR048634">
    <property type="entry name" value="SecD_SecF_C"/>
</dbReference>
<dbReference type="NCBIfam" id="NF006218">
    <property type="entry name" value="PRK08343.1-4"/>
    <property type="match status" value="1"/>
</dbReference>
<dbReference type="PANTHER" id="PTHR30081:SF1">
    <property type="entry name" value="PROTEIN TRANSLOCASE SUBUNIT SECD"/>
    <property type="match status" value="1"/>
</dbReference>
<dbReference type="PANTHER" id="PTHR30081">
    <property type="entry name" value="PROTEIN-EXPORT MEMBRANE PROTEIN SEC"/>
    <property type="match status" value="1"/>
</dbReference>
<dbReference type="Pfam" id="PF07549">
    <property type="entry name" value="Sec_GG"/>
    <property type="match status" value="1"/>
</dbReference>
<dbReference type="Pfam" id="PF21760">
    <property type="entry name" value="SecD_1st"/>
    <property type="match status" value="1"/>
</dbReference>
<dbReference type="Pfam" id="PF02355">
    <property type="entry name" value="SecD_SecF_C"/>
    <property type="match status" value="1"/>
</dbReference>
<dbReference type="SUPFAM" id="SSF82866">
    <property type="entry name" value="Multidrug efflux transporter AcrB transmembrane domain"/>
    <property type="match status" value="1"/>
</dbReference>
<gene>
    <name evidence="1" type="primary">secD</name>
    <name type="ordered locus">MJ0111</name>
</gene>
<proteinExistence type="inferred from homology"/>
<organism>
    <name type="scientific">Methanocaldococcus jannaschii (strain ATCC 43067 / DSM 2661 / JAL-1 / JCM 10045 / NBRC 100440)</name>
    <name type="common">Methanococcus jannaschii</name>
    <dbReference type="NCBI Taxonomy" id="243232"/>
    <lineage>
        <taxon>Archaea</taxon>
        <taxon>Methanobacteriati</taxon>
        <taxon>Methanobacteriota</taxon>
        <taxon>Methanomada group</taxon>
        <taxon>Methanococci</taxon>
        <taxon>Methanococcales</taxon>
        <taxon>Methanocaldococcaceae</taxon>
        <taxon>Methanocaldococcus</taxon>
    </lineage>
</organism>